<organism>
    <name type="scientific">Mycobacterium tuberculosis (strain CDC 1551 / Oshkosh)</name>
    <dbReference type="NCBI Taxonomy" id="83331"/>
    <lineage>
        <taxon>Bacteria</taxon>
        <taxon>Bacillati</taxon>
        <taxon>Actinomycetota</taxon>
        <taxon>Actinomycetes</taxon>
        <taxon>Mycobacteriales</taxon>
        <taxon>Mycobacteriaceae</taxon>
        <taxon>Mycobacterium</taxon>
        <taxon>Mycobacterium tuberculosis complex</taxon>
    </lineage>
</organism>
<protein>
    <recommendedName>
        <fullName>Putative peroxiredoxin MT2597</fullName>
        <ecNumber evidence="1">1.11.1.24</ecNumber>
    </recommendedName>
    <alternativeName>
        <fullName>Bacterioferritin comigratory protein</fullName>
    </alternativeName>
    <alternativeName>
        <fullName>Thioredoxin peroxidase</fullName>
    </alternativeName>
    <alternativeName>
        <fullName evidence="3">Thioredoxin-dependent peroxiredoxin MT2597</fullName>
    </alternativeName>
</protein>
<feature type="chain" id="PRO_0000428023" description="Putative peroxiredoxin MT2597">
    <location>
        <begin position="1"/>
        <end position="157"/>
    </location>
</feature>
<feature type="domain" description="Thioredoxin" evidence="2">
    <location>
        <begin position="7"/>
        <end position="157"/>
    </location>
</feature>
<feature type="active site" description="Cysteine sulfenic acid (-SOH) intermediate" evidence="1">
    <location>
        <position position="49"/>
    </location>
</feature>
<feature type="disulfide bond" description="Redox-active" evidence="1">
    <location>
        <begin position="49"/>
        <end position="54"/>
    </location>
</feature>
<keyword id="KW-0049">Antioxidant</keyword>
<keyword id="KW-1015">Disulfide bond</keyword>
<keyword id="KW-0560">Oxidoreductase</keyword>
<keyword id="KW-0575">Peroxidase</keyword>
<keyword id="KW-0676">Redox-active center</keyword>
<keyword id="KW-1185">Reference proteome</keyword>
<gene>
    <name type="primary">bcp</name>
    <name type="synonym">bcp2</name>
    <name type="ordered locus">MT2597</name>
</gene>
<reference key="1">
    <citation type="journal article" date="2002" name="J. Bacteriol.">
        <title>Whole-genome comparison of Mycobacterium tuberculosis clinical and laboratory strains.</title>
        <authorList>
            <person name="Fleischmann R.D."/>
            <person name="Alland D."/>
            <person name="Eisen J.A."/>
            <person name="Carpenter L."/>
            <person name="White O."/>
            <person name="Peterson J.D."/>
            <person name="DeBoy R.T."/>
            <person name="Dodson R.J."/>
            <person name="Gwinn M.L."/>
            <person name="Haft D.H."/>
            <person name="Hickey E.K."/>
            <person name="Kolonay J.F."/>
            <person name="Nelson W.C."/>
            <person name="Umayam L.A."/>
            <person name="Ermolaeva M.D."/>
            <person name="Salzberg S.L."/>
            <person name="Delcher A."/>
            <person name="Utterback T.R."/>
            <person name="Weidman J.F."/>
            <person name="Khouri H.M."/>
            <person name="Gill J."/>
            <person name="Mikula A."/>
            <person name="Bishai W."/>
            <person name="Jacobs W.R. Jr."/>
            <person name="Venter J.C."/>
            <person name="Fraser C.M."/>
        </authorList>
    </citation>
    <scope>NUCLEOTIDE SEQUENCE [LARGE SCALE GENOMIC DNA]</scope>
    <source>
        <strain>CDC 1551 / Oshkosh</strain>
    </source>
</reference>
<sequence>MTKTTRLTPGDKAPAFTLPDADGNNVSLADYRGRRVIVYFYPAASTPGCTKQACDFRDNLGDFTTAGLNVVGISPDKPEKLATFRDAQGLTFPLLSDPDREVLTAWGAYGEKQMYGKTVQGVIRSTFVVDEDGKIVVAQYNVKATGHVAKLRRDLSV</sequence>
<dbReference type="EC" id="1.11.1.24" evidence="1"/>
<dbReference type="EMBL" id="AE000516">
    <property type="protein sequence ID" value="AAK46904.1"/>
    <property type="molecule type" value="Genomic_DNA"/>
</dbReference>
<dbReference type="PIR" id="F70870">
    <property type="entry name" value="F70870"/>
</dbReference>
<dbReference type="RefSeq" id="WP_003412944.1">
    <property type="nucleotide sequence ID" value="NZ_KK341227.1"/>
</dbReference>
<dbReference type="SMR" id="P9WIE0"/>
<dbReference type="KEGG" id="mtc:MT2597"/>
<dbReference type="PATRIC" id="fig|83331.31.peg.2800"/>
<dbReference type="HOGENOM" id="CLU_042529_14_1_11"/>
<dbReference type="Proteomes" id="UP000001020">
    <property type="component" value="Chromosome"/>
</dbReference>
<dbReference type="GO" id="GO:0005737">
    <property type="term" value="C:cytoplasm"/>
    <property type="evidence" value="ECO:0007669"/>
    <property type="project" value="TreeGrafter"/>
</dbReference>
<dbReference type="GO" id="GO:0008379">
    <property type="term" value="F:thioredoxin peroxidase activity"/>
    <property type="evidence" value="ECO:0007669"/>
    <property type="project" value="TreeGrafter"/>
</dbReference>
<dbReference type="GO" id="GO:0045454">
    <property type="term" value="P:cell redox homeostasis"/>
    <property type="evidence" value="ECO:0007669"/>
    <property type="project" value="TreeGrafter"/>
</dbReference>
<dbReference type="GO" id="GO:0034599">
    <property type="term" value="P:cellular response to oxidative stress"/>
    <property type="evidence" value="ECO:0007669"/>
    <property type="project" value="TreeGrafter"/>
</dbReference>
<dbReference type="CDD" id="cd03017">
    <property type="entry name" value="PRX_BCP"/>
    <property type="match status" value="1"/>
</dbReference>
<dbReference type="FunFam" id="3.40.30.10:FF:000007">
    <property type="entry name" value="Thioredoxin-dependent thiol peroxidase"/>
    <property type="match status" value="1"/>
</dbReference>
<dbReference type="Gene3D" id="3.40.30.10">
    <property type="entry name" value="Glutaredoxin"/>
    <property type="match status" value="1"/>
</dbReference>
<dbReference type="InterPro" id="IPR000866">
    <property type="entry name" value="AhpC/TSA"/>
</dbReference>
<dbReference type="InterPro" id="IPR024706">
    <property type="entry name" value="Peroxiredoxin_AhpC-typ"/>
</dbReference>
<dbReference type="InterPro" id="IPR050924">
    <property type="entry name" value="Peroxiredoxin_BCP/PrxQ"/>
</dbReference>
<dbReference type="InterPro" id="IPR036249">
    <property type="entry name" value="Thioredoxin-like_sf"/>
</dbReference>
<dbReference type="InterPro" id="IPR013766">
    <property type="entry name" value="Thioredoxin_domain"/>
</dbReference>
<dbReference type="NCBIfam" id="NF006960">
    <property type="entry name" value="PRK09437.1"/>
    <property type="match status" value="1"/>
</dbReference>
<dbReference type="PANTHER" id="PTHR42801:SF4">
    <property type="entry name" value="AHPC_TSA FAMILY PROTEIN"/>
    <property type="match status" value="1"/>
</dbReference>
<dbReference type="PANTHER" id="PTHR42801">
    <property type="entry name" value="THIOREDOXIN-DEPENDENT PEROXIDE REDUCTASE"/>
    <property type="match status" value="1"/>
</dbReference>
<dbReference type="Pfam" id="PF00578">
    <property type="entry name" value="AhpC-TSA"/>
    <property type="match status" value="1"/>
</dbReference>
<dbReference type="PIRSF" id="PIRSF000239">
    <property type="entry name" value="AHPC"/>
    <property type="match status" value="1"/>
</dbReference>
<dbReference type="SUPFAM" id="SSF52833">
    <property type="entry name" value="Thioredoxin-like"/>
    <property type="match status" value="1"/>
</dbReference>
<dbReference type="PROSITE" id="PS51352">
    <property type="entry name" value="THIOREDOXIN_2"/>
    <property type="match status" value="1"/>
</dbReference>
<name>BCP_MYCTO</name>
<comment type="function">
    <text evidence="1">Thiol-specific peroxidase that catalyzes the reduction of hydrogen peroxide and organic hydroperoxides to water and alcohols, respectively. Plays a role in cell protection against oxidative stress by detoxifying peroxides and as sensor of hydrogen peroxide-mediated signaling events.</text>
</comment>
<comment type="catalytic activity">
    <reaction evidence="1">
        <text>a hydroperoxide + [thioredoxin]-dithiol = an alcohol + [thioredoxin]-disulfide + H2O</text>
        <dbReference type="Rhea" id="RHEA:62620"/>
        <dbReference type="Rhea" id="RHEA-COMP:10698"/>
        <dbReference type="Rhea" id="RHEA-COMP:10700"/>
        <dbReference type="ChEBI" id="CHEBI:15377"/>
        <dbReference type="ChEBI" id="CHEBI:29950"/>
        <dbReference type="ChEBI" id="CHEBI:30879"/>
        <dbReference type="ChEBI" id="CHEBI:35924"/>
        <dbReference type="ChEBI" id="CHEBI:50058"/>
        <dbReference type="EC" id="1.11.1.24"/>
    </reaction>
</comment>
<comment type="subunit">
    <text evidence="1">Monomer.</text>
</comment>
<comment type="miscellaneous">
    <text evidence="1">The active site is a conserved redox-active cysteine residue, the peroxidatic cysteine (C(P)), which makes the nucleophilic attack on the peroxide substrate. The peroxide oxidizes the C(P)-SH to cysteine sulfenic acid (C(P)-SOH), which then reacts with another cysteine residue, the resolving cysteine (C(R)), to form a disulfide bridge. The disulfide is subsequently reduced by an appropriate electron donor to complete the catalytic cycle. In this atypical 2-Cys peroxiredoxin, C(R) is present in the same subunit to form an intramolecular disulfide. The disulfide is subsequently reduced by thioredoxin.</text>
</comment>
<comment type="similarity">
    <text evidence="3">Belongs to the peroxiredoxin family. BCP/PrxQ subfamily.</text>
</comment>
<accession>P9WIE0</accession>
<accession>L0T9V8</accession>
<accession>O53226</accession>
<accession>Q7D6Z5</accession>
<evidence type="ECO:0000250" key="1">
    <source>
        <dbReference type="UniProtKB" id="P0AE52"/>
    </source>
</evidence>
<evidence type="ECO:0000255" key="2">
    <source>
        <dbReference type="PROSITE-ProRule" id="PRU00691"/>
    </source>
</evidence>
<evidence type="ECO:0000305" key="3"/>
<proteinExistence type="inferred from homology"/>